<sequence length="10" mass="1070">TPASGFFGMR</sequence>
<reference evidence="3" key="1">
    <citation type="journal article" date="2009" name="Peptides">
        <title>Neuropeptides in Heteroptera: identification of allatotropin-related peptide and tachykinin-related peptides using MALDI-TOF mass spectrometry.</title>
        <authorList>
            <person name="Neupert S."/>
            <person name="Russell W.K."/>
            <person name="Russell D.H."/>
            <person name="Lopez J.D. Jr."/>
            <person name="Predel R."/>
            <person name="Nachman R.J."/>
        </authorList>
    </citation>
    <scope>PROTEIN SEQUENCE</scope>
    <scope>SUBCELLULAR LOCATION</scope>
    <scope>TISSUE SPECIFICITY</scope>
    <scope>AMIDATION AT ARG-10</scope>
    <source>
        <tissue evidence="1">Antennal lobe</tissue>
    </source>
</reference>
<proteinExistence type="evidence at protein level"/>
<comment type="subcellular location">
    <subcellularLocation>
        <location evidence="1 3">Secreted</location>
    </subcellularLocation>
</comment>
<comment type="tissue specificity">
    <text evidence="1">Expressed in the antennal lobe (at protein level).</text>
</comment>
<organism>
    <name type="scientific">Pyrrhocoris apterus</name>
    <name type="common">Sap sucking bug</name>
    <name type="synonym">Cimex apterus</name>
    <dbReference type="NCBI Taxonomy" id="37000"/>
    <lineage>
        <taxon>Eukaryota</taxon>
        <taxon>Metazoa</taxon>
        <taxon>Ecdysozoa</taxon>
        <taxon>Arthropoda</taxon>
        <taxon>Hexapoda</taxon>
        <taxon>Insecta</taxon>
        <taxon>Pterygota</taxon>
        <taxon>Neoptera</taxon>
        <taxon>Paraneoptera</taxon>
        <taxon>Hemiptera</taxon>
        <taxon>Heteroptera</taxon>
        <taxon>Panheteroptera</taxon>
        <taxon>Pentatomomorpha</taxon>
        <taxon>Pyrrhocoroidea</taxon>
        <taxon>Pyrrhocoridae</taxon>
        <taxon>Pyrrhocoris</taxon>
    </lineage>
</organism>
<feature type="peptide" id="PRO_0000395665" description="Tachykinin-related peptide 4" evidence="1">
    <location>
        <begin position="1"/>
        <end position="10"/>
    </location>
</feature>
<feature type="modified residue" description="Arginine amide" evidence="1">
    <location>
        <position position="10"/>
    </location>
</feature>
<name>TRP4_PYRAP</name>
<evidence type="ECO:0000269" key="1">
    <source>
    </source>
</evidence>
<evidence type="ECO:0000303" key="2">
    <source>
    </source>
</evidence>
<evidence type="ECO:0000305" key="3"/>
<keyword id="KW-0027">Amidation</keyword>
<keyword id="KW-0903">Direct protein sequencing</keyword>
<keyword id="KW-0527">Neuropeptide</keyword>
<keyword id="KW-0964">Secreted</keyword>
<dbReference type="GO" id="GO:0005576">
    <property type="term" value="C:extracellular region"/>
    <property type="evidence" value="ECO:0007005"/>
    <property type="project" value="UniProtKB"/>
</dbReference>
<dbReference type="GO" id="GO:0007218">
    <property type="term" value="P:neuropeptide signaling pathway"/>
    <property type="evidence" value="ECO:0007669"/>
    <property type="project" value="UniProtKB-KW"/>
</dbReference>
<accession>P86597</accession>
<protein>
    <recommendedName>
        <fullName evidence="2">Tachykinin-related peptide 4</fullName>
        <shortName evidence="2">TKRP-4</shortName>
    </recommendedName>
</protein>